<organism>
    <name type="scientific">Mycolicibacterium paratuberculosis (strain ATCC BAA-968 / K-10)</name>
    <name type="common">Mycobacterium paratuberculosis</name>
    <dbReference type="NCBI Taxonomy" id="262316"/>
    <lineage>
        <taxon>Bacteria</taxon>
        <taxon>Bacillati</taxon>
        <taxon>Actinomycetota</taxon>
        <taxon>Actinomycetes</taxon>
        <taxon>Mycobacteriales</taxon>
        <taxon>Mycobacteriaceae</taxon>
        <taxon>Mycobacterium</taxon>
        <taxon>Mycobacterium avium complex (MAC)</taxon>
    </lineage>
</organism>
<protein>
    <recommendedName>
        <fullName>UPF0719 transmembrane protein MAP_1032c</fullName>
    </recommendedName>
</protein>
<dbReference type="EMBL" id="AJ250020">
    <property type="protein sequence ID" value="CAB96064.1"/>
    <property type="molecule type" value="Genomic_DNA"/>
</dbReference>
<dbReference type="EMBL" id="AE016958">
    <property type="protein sequence ID" value="AAS03349.1"/>
    <property type="molecule type" value="Genomic_DNA"/>
</dbReference>
<dbReference type="RefSeq" id="WP_003872690.1">
    <property type="nucleotide sequence ID" value="NZ_CP106873.1"/>
</dbReference>
<dbReference type="SMR" id="Q9K537"/>
<dbReference type="STRING" id="262316.MAP_1032c"/>
<dbReference type="KEGG" id="mpa:MAP_1032c"/>
<dbReference type="eggNOG" id="COG3766">
    <property type="taxonomic scope" value="Bacteria"/>
</dbReference>
<dbReference type="HOGENOM" id="CLU_135044_0_0_11"/>
<dbReference type="Proteomes" id="UP000000580">
    <property type="component" value="Chromosome"/>
</dbReference>
<dbReference type="GO" id="GO:0005886">
    <property type="term" value="C:plasma membrane"/>
    <property type="evidence" value="ECO:0007669"/>
    <property type="project" value="UniProtKB-SubCell"/>
</dbReference>
<dbReference type="InterPro" id="IPR007140">
    <property type="entry name" value="DUF350"/>
</dbReference>
<dbReference type="Pfam" id="PF03994">
    <property type="entry name" value="DUF350"/>
    <property type="match status" value="1"/>
</dbReference>
<reference key="1">
    <citation type="journal article" date="2000" name="Microbiology">
        <title>Characterization of IS900 loci in Mycobacterium avium subsp. paratuberculosis and development of multiplex PCR typing.</title>
        <authorList>
            <person name="Bull T.J."/>
            <person name="Hermon-Taylor J."/>
            <person name="Pavlik I."/>
            <person name="El-Zaatari F."/>
            <person name="Tizard M."/>
        </authorList>
    </citation>
    <scope>NUCLEOTIDE SEQUENCE [GENOMIC DNA]</scope>
</reference>
<reference key="2">
    <citation type="journal article" date="2005" name="Proc. Natl. Acad. Sci. U.S.A.">
        <title>The complete genome sequence of Mycobacterium avium subspecies paratuberculosis.</title>
        <authorList>
            <person name="Li L."/>
            <person name="Bannantine J.P."/>
            <person name="Zhang Q."/>
            <person name="Amonsin A."/>
            <person name="May B.J."/>
            <person name="Alt D."/>
            <person name="Banerji N."/>
            <person name="Kanjilal S."/>
            <person name="Kapur V."/>
        </authorList>
    </citation>
    <scope>NUCLEOTIDE SEQUENCE [LARGE SCALE GENOMIC DNA]</scope>
    <source>
        <strain>ATCC BAA-968 / K-10</strain>
    </source>
</reference>
<keyword id="KW-1003">Cell membrane</keyword>
<keyword id="KW-0472">Membrane</keyword>
<keyword id="KW-1185">Reference proteome</keyword>
<keyword id="KW-0812">Transmembrane</keyword>
<keyword id="KW-1133">Transmembrane helix</keyword>
<gene>
    <name type="ordered locus">MAP_1032c</name>
</gene>
<proteinExistence type="inferred from homology"/>
<feature type="chain" id="PRO_0000104071" description="UPF0719 transmembrane protein MAP_1032c">
    <location>
        <begin position="1"/>
        <end position="151"/>
    </location>
</feature>
<feature type="transmembrane region" description="Helical" evidence="1">
    <location>
        <begin position="20"/>
        <end position="40"/>
    </location>
</feature>
<feature type="transmembrane region" description="Helical" evidence="1">
    <location>
        <begin position="60"/>
        <end position="80"/>
    </location>
</feature>
<feature type="transmembrane region" description="Helical" evidence="1">
    <location>
        <begin position="90"/>
        <end position="110"/>
    </location>
</feature>
<feature type="transmembrane region" description="Helical" evidence="1">
    <location>
        <begin position="130"/>
        <end position="150"/>
    </location>
</feature>
<accession>Q9K537</accession>
<name>Y1032_MYCPA</name>
<evidence type="ECO:0000255" key="1"/>
<evidence type="ECO:0000305" key="2"/>
<sequence>MYLAVEIGTVDLNPVLKGAVATILYFAVGMAVLLVGFYAVDLLTPGKLRQLVFIDRRPNAVVVAGAMYIALTVVIITAIANSYSQLGQGLVGVAVYGLMGVILLGVALLAMHLLIPGSFHEHVEEPQLHPGSFAVALILLAVGGVTAAAVS</sequence>
<comment type="subcellular location">
    <subcellularLocation>
        <location evidence="2">Cell membrane</location>
        <topology evidence="2">Multi-pass membrane protein</topology>
    </subcellularLocation>
</comment>
<comment type="similarity">
    <text evidence="2">Belongs to the UPF0719 family.</text>
</comment>